<name>ACTL9_HUMAN</name>
<comment type="function">
    <text evidence="4">Testis-specic protein that plays an important role in fusion of proacrosomal vesicles and perinuclear theca formation.</text>
</comment>
<comment type="subunit">
    <text evidence="4">Interacts with ACTL7A.</text>
</comment>
<comment type="subcellular location">
    <subcellularLocation>
        <location evidence="4">Cytoplasmic vesicle</location>
        <location evidence="4">Secretory vesicle</location>
        <location evidence="4">Acrosome</location>
    </subcellularLocation>
    <subcellularLocation>
        <location evidence="4">Cytoplasm</location>
        <location evidence="4">Cytoskeleton</location>
        <location evidence="4">Perinuclear theca</location>
    </subcellularLocation>
    <text evidence="4">Localizes predominantly in the equatorial segment of the sperm head and neck regions, with some localization in the acrosomal segment of the head. Colocalizes in the acrosomal and equatorial segments of sperm with ACTL7A. Colocalizes with PLCZ1 in the equatorial segment of the head of capacitated sperm.</text>
</comment>
<comment type="tissue specificity">
    <text evidence="4">Testis-specific.</text>
</comment>
<comment type="disease" evidence="4">
    <disease id="DI-06072">
        <name>Spermatogenic failure 53</name>
        <acronym>SPGF53</acronym>
        <description>An autosomal recessive infertility disorder characterized by impaired oocyte fertilization due to oocyte activation failure, in association with structural anomalies in sperm heads.</description>
        <dbReference type="MIM" id="619258"/>
    </disease>
    <text>The disease is caused by variants affecting the gene represented in this entry.</text>
</comment>
<comment type="similarity">
    <text evidence="6">Belongs to the actin family.</text>
</comment>
<feature type="chain" id="PRO_0000332297" description="Actin-like protein 9">
    <location>
        <begin position="1"/>
        <end position="416"/>
    </location>
</feature>
<feature type="region of interest" description="Disordered" evidence="1">
    <location>
        <begin position="1"/>
        <end position="40"/>
    </location>
</feature>
<feature type="sequence variant" id="VAR_043000" description="In dbSNP:rs2340550." evidence="2">
    <original>S</original>
    <variation>F</variation>
    <location>
        <position position="37"/>
    </location>
</feature>
<feature type="sequence variant" id="VAR_043001" description="In a colorectal cancer sample; somatic mutation; dbSNP:rs2146191770." evidence="3">
    <original>A</original>
    <variation>D</variation>
    <location>
        <position position="42"/>
    </location>
</feature>
<feature type="sequence variant" id="VAR_043002" description="In dbSNP:rs10410943." evidence="2">
    <original>A</original>
    <variation>V</variation>
    <location>
        <position position="51"/>
    </location>
</feature>
<feature type="sequence variant" id="VAR_043003" description="In dbSNP:rs4804079." evidence="2 5">
    <original>N</original>
    <variation>H</variation>
    <location>
        <position position="227"/>
    </location>
</feature>
<feature type="sequence variant" id="VAR_043004" description="In a colorectal cancer sample; somatic mutation; dbSNP:rs782721280." evidence="3">
    <original>A</original>
    <variation>T</variation>
    <location>
        <position position="332"/>
    </location>
</feature>
<feature type="sequence variant" id="VAR_085431" description="In SPGF53; uncertain significance; reduces interaction with ACTL7A; dbSNP:rs1478948010." evidence="4">
    <original>S</original>
    <variation>L</variation>
    <location>
        <position position="345"/>
    </location>
</feature>
<feature type="sequence variant" id="VAR_085432" description="In SPGF53; uncertain significance; reduces interaction with ACTL7A; dbSNP:rs532021673." evidence="4">
    <original>V</original>
    <variation>L</variation>
    <location>
        <position position="380"/>
    </location>
</feature>
<feature type="sequence variant" id="VAR_085433" description="In SPGF53; uncertain significance; abolishes interaction with ACTL7A." evidence="4">
    <location>
        <begin position="403"/>
        <end position="416"/>
    </location>
</feature>
<feature type="sequence conflict" description="In Ref. 1; AAP20052." evidence="6" ref="1">
    <original>F</original>
    <variation>S</variation>
    <location>
        <position position="148"/>
    </location>
</feature>
<organism>
    <name type="scientific">Homo sapiens</name>
    <name type="common">Human</name>
    <dbReference type="NCBI Taxonomy" id="9606"/>
    <lineage>
        <taxon>Eukaryota</taxon>
        <taxon>Metazoa</taxon>
        <taxon>Chordata</taxon>
        <taxon>Craniata</taxon>
        <taxon>Vertebrata</taxon>
        <taxon>Euteleostomi</taxon>
        <taxon>Mammalia</taxon>
        <taxon>Eutheria</taxon>
        <taxon>Euarchontoglires</taxon>
        <taxon>Primates</taxon>
        <taxon>Haplorrhini</taxon>
        <taxon>Catarrhini</taxon>
        <taxon>Hominidae</taxon>
        <taxon>Homo</taxon>
    </lineage>
</organism>
<sequence>MDASRPKSSESQSSLEAPRPGPNPSPNVVNKPLQRDSPGMVADRLPPKTGAVVIDMGTGTCKVGFAGQASPTYTVATILGCQPKKPATSGQSGLQTFIGEAARVLPELTLVQPLRSGIVVDWDAAELIWRHLLEHDLRVATHDHPLLFSDPPFSPATNREKLVEVAFESLRSPAMYVASQSVLSVYAHGRVSGLVVDTGHGVTYTVPVFQGYNLLHATERLDLAGNNLTAFLAEMLLQAGLPLGQQDLDLVENIKHHYCYVASDFQKEQARPEQEYKRTLKLPDGRTVTLGKELFQCPELLFNPPEVPGLSPVGLSTMAKQSLRKLSLEMRADLAQNVLLCGGSSLFTGFEGRFRAELLRALPAETHVVVAAQPTRNFSVWIGGSILASLRAFQSCWVLREQYEEQGPYIVYRKCY</sequence>
<evidence type="ECO:0000256" key="1">
    <source>
        <dbReference type="SAM" id="MobiDB-lite"/>
    </source>
</evidence>
<evidence type="ECO:0000269" key="2">
    <source>
    </source>
</evidence>
<evidence type="ECO:0000269" key="3">
    <source>
    </source>
</evidence>
<evidence type="ECO:0000269" key="4">
    <source>
    </source>
</evidence>
<evidence type="ECO:0000269" key="5">
    <source ref="1"/>
</evidence>
<evidence type="ECO:0000305" key="6"/>
<evidence type="ECO:0000312" key="7">
    <source>
        <dbReference type="HGNC" id="HGNC:28494"/>
    </source>
</evidence>
<accession>Q8TC94</accession>
<accession>A8K893</accession>
<accession>Q6X960</accession>
<protein>
    <recommendedName>
        <fullName>Actin-like protein 9</fullName>
    </recommendedName>
</protein>
<proteinExistence type="evidence at protein level"/>
<dbReference type="EMBL" id="AY248901">
    <property type="protein sequence ID" value="AAP20052.1"/>
    <property type="molecule type" value="mRNA"/>
</dbReference>
<dbReference type="EMBL" id="AK292258">
    <property type="protein sequence ID" value="BAF84947.1"/>
    <property type="molecule type" value="mRNA"/>
</dbReference>
<dbReference type="EMBL" id="AC093230">
    <property type="status" value="NOT_ANNOTATED_CDS"/>
    <property type="molecule type" value="Genomic_DNA"/>
</dbReference>
<dbReference type="EMBL" id="BC024028">
    <property type="protein sequence ID" value="AAH24028.1"/>
    <property type="molecule type" value="mRNA"/>
</dbReference>
<dbReference type="EMBL" id="BC045752">
    <property type="protein sequence ID" value="AAH45752.1"/>
    <property type="molecule type" value="mRNA"/>
</dbReference>
<dbReference type="CCDS" id="CCDS12207.1"/>
<dbReference type="RefSeq" id="NP_848620.3">
    <property type="nucleotide sequence ID" value="NM_178525.5"/>
</dbReference>
<dbReference type="SMR" id="Q8TC94"/>
<dbReference type="BioGRID" id="129853">
    <property type="interactions" value="2"/>
</dbReference>
<dbReference type="FunCoup" id="Q8TC94">
    <property type="interactions" value="11"/>
</dbReference>
<dbReference type="IntAct" id="Q8TC94">
    <property type="interactions" value="1"/>
</dbReference>
<dbReference type="STRING" id="9606.ENSP00000316674"/>
<dbReference type="iPTMnet" id="Q8TC94"/>
<dbReference type="PhosphoSitePlus" id="Q8TC94"/>
<dbReference type="BioMuta" id="ACTL9"/>
<dbReference type="DMDM" id="308153636"/>
<dbReference type="jPOST" id="Q8TC94"/>
<dbReference type="MassIVE" id="Q8TC94"/>
<dbReference type="PaxDb" id="9606-ENSP00000316674"/>
<dbReference type="PeptideAtlas" id="Q8TC94"/>
<dbReference type="ProteomicsDB" id="74103"/>
<dbReference type="Antibodypedia" id="12540">
    <property type="antibodies" value="112 antibodies from 20 providers"/>
</dbReference>
<dbReference type="DNASU" id="284382"/>
<dbReference type="Ensembl" id="ENST00000324436.5">
    <property type="protein sequence ID" value="ENSP00000316674.3"/>
    <property type="gene ID" value="ENSG00000181786.6"/>
</dbReference>
<dbReference type="GeneID" id="284382"/>
<dbReference type="KEGG" id="hsa:284382"/>
<dbReference type="MANE-Select" id="ENST00000324436.5">
    <property type="protein sequence ID" value="ENSP00000316674.3"/>
    <property type="RefSeq nucleotide sequence ID" value="NM_178525.5"/>
    <property type="RefSeq protein sequence ID" value="NP_848620.3"/>
</dbReference>
<dbReference type="UCSC" id="uc032hly.2">
    <property type="organism name" value="human"/>
</dbReference>
<dbReference type="AGR" id="HGNC:28494"/>
<dbReference type="CTD" id="284382"/>
<dbReference type="DisGeNET" id="284382"/>
<dbReference type="GeneCards" id="ACTL9"/>
<dbReference type="HGNC" id="HGNC:28494">
    <property type="gene designation" value="ACTL9"/>
</dbReference>
<dbReference type="HPA" id="ENSG00000181786">
    <property type="expression patterns" value="Tissue enriched (testis)"/>
</dbReference>
<dbReference type="MalaCards" id="ACTL9"/>
<dbReference type="MIM" id="619251">
    <property type="type" value="gene"/>
</dbReference>
<dbReference type="MIM" id="619258">
    <property type="type" value="phenotype"/>
</dbReference>
<dbReference type="neXtProt" id="NX_Q8TC94"/>
<dbReference type="OpenTargets" id="ENSG00000181786"/>
<dbReference type="Orphanet" id="276234">
    <property type="disease" value="Non-syndromic male infertility due to sperm motility disorder"/>
</dbReference>
<dbReference type="PharmGKB" id="PA165392996"/>
<dbReference type="VEuPathDB" id="HostDB:ENSG00000181786"/>
<dbReference type="eggNOG" id="KOG0676">
    <property type="taxonomic scope" value="Eukaryota"/>
</dbReference>
<dbReference type="GeneTree" id="ENSGT00940000163012"/>
<dbReference type="HOGENOM" id="CLU_027965_0_2_1"/>
<dbReference type="InParanoid" id="Q8TC94"/>
<dbReference type="OMA" id="HATERMD"/>
<dbReference type="OrthoDB" id="9932367at2759"/>
<dbReference type="PAN-GO" id="Q8TC94">
    <property type="GO annotations" value="1 GO annotation based on evolutionary models"/>
</dbReference>
<dbReference type="PhylomeDB" id="Q8TC94"/>
<dbReference type="TreeFam" id="TF354237"/>
<dbReference type="PathwayCommons" id="Q8TC94"/>
<dbReference type="SignaLink" id="Q8TC94"/>
<dbReference type="BioGRID-ORCS" id="284382">
    <property type="hits" value="14 hits in 1136 CRISPR screens"/>
</dbReference>
<dbReference type="GenomeRNAi" id="284382"/>
<dbReference type="Pharos" id="Q8TC94">
    <property type="development level" value="Tdark"/>
</dbReference>
<dbReference type="PRO" id="PR:Q8TC94"/>
<dbReference type="Proteomes" id="UP000005640">
    <property type="component" value="Chromosome 19"/>
</dbReference>
<dbReference type="RNAct" id="Q8TC94">
    <property type="molecule type" value="protein"/>
</dbReference>
<dbReference type="Bgee" id="ENSG00000181786">
    <property type="expression patterns" value="Expressed in male germ line stem cell (sensu Vertebrata) in testis and 36 other cell types or tissues"/>
</dbReference>
<dbReference type="GO" id="GO:0001669">
    <property type="term" value="C:acrosomal vesicle"/>
    <property type="evidence" value="ECO:0000314"/>
    <property type="project" value="UniProtKB"/>
</dbReference>
<dbReference type="GO" id="GO:0015629">
    <property type="term" value="C:actin cytoskeleton"/>
    <property type="evidence" value="ECO:0000318"/>
    <property type="project" value="GO_Central"/>
</dbReference>
<dbReference type="GO" id="GO:0033011">
    <property type="term" value="C:perinuclear theca"/>
    <property type="evidence" value="ECO:0000314"/>
    <property type="project" value="UniProtKB"/>
</dbReference>
<dbReference type="GO" id="GO:0061827">
    <property type="term" value="C:sperm head"/>
    <property type="evidence" value="ECO:0000314"/>
    <property type="project" value="UniProtKB"/>
</dbReference>
<dbReference type="GO" id="GO:0001675">
    <property type="term" value="P:acrosome assembly"/>
    <property type="evidence" value="ECO:0000315"/>
    <property type="project" value="UniProtKB"/>
</dbReference>
<dbReference type="GO" id="GO:0009566">
    <property type="term" value="P:fertilization"/>
    <property type="evidence" value="ECO:0000314"/>
    <property type="project" value="UniProtKB"/>
</dbReference>
<dbReference type="GO" id="GO:0007338">
    <property type="term" value="P:single fertilization"/>
    <property type="evidence" value="ECO:0007669"/>
    <property type="project" value="UniProtKB-KW"/>
</dbReference>
<dbReference type="CDD" id="cd10214">
    <property type="entry name" value="ASKHA_NBD_ACTL7"/>
    <property type="match status" value="1"/>
</dbReference>
<dbReference type="FunFam" id="3.90.640.10:FF:000007">
    <property type="entry name" value="Actin like 7B"/>
    <property type="match status" value="1"/>
</dbReference>
<dbReference type="FunFam" id="3.30.420.40:FF:000050">
    <property type="entry name" value="Actin, alpha skeletal muscle"/>
    <property type="match status" value="1"/>
</dbReference>
<dbReference type="Gene3D" id="3.30.420.40">
    <property type="match status" value="2"/>
</dbReference>
<dbReference type="Gene3D" id="3.90.640.10">
    <property type="entry name" value="Actin, Chain A, domain 4"/>
    <property type="match status" value="1"/>
</dbReference>
<dbReference type="InterPro" id="IPR004000">
    <property type="entry name" value="Actin"/>
</dbReference>
<dbReference type="InterPro" id="IPR043129">
    <property type="entry name" value="ATPase_NBD"/>
</dbReference>
<dbReference type="PANTHER" id="PTHR11937">
    <property type="entry name" value="ACTIN"/>
    <property type="match status" value="1"/>
</dbReference>
<dbReference type="Pfam" id="PF00022">
    <property type="entry name" value="Actin"/>
    <property type="match status" value="1"/>
</dbReference>
<dbReference type="PRINTS" id="PR00190">
    <property type="entry name" value="ACTIN"/>
</dbReference>
<dbReference type="SMART" id="SM00268">
    <property type="entry name" value="ACTIN"/>
    <property type="match status" value="1"/>
</dbReference>
<dbReference type="SUPFAM" id="SSF53067">
    <property type="entry name" value="Actin-like ATPase domain"/>
    <property type="match status" value="2"/>
</dbReference>
<gene>
    <name evidence="7" type="primary">ACTL9</name>
    <name type="synonym">ACTL7C</name>
    <name type="ORF">HSD21</name>
</gene>
<keyword id="KW-0963">Cytoplasm</keyword>
<keyword id="KW-0968">Cytoplasmic vesicle</keyword>
<keyword id="KW-0206">Cytoskeleton</keyword>
<keyword id="KW-0225">Disease variant</keyword>
<keyword id="KW-0278">Fertilization</keyword>
<keyword id="KW-1267">Proteomics identification</keyword>
<keyword id="KW-1185">Reference proteome</keyword>
<reference key="1">
    <citation type="submission" date="2003-03" db="EMBL/GenBank/DDBJ databases">
        <title>A new spermatogenesis-related gene.</title>
        <authorList>
            <person name="Yang C.B."/>
            <person name="Miao S.Y."/>
            <person name="Zhang X.D."/>
            <person name="Qiao Y."/>
            <person name="Liang G."/>
            <person name="Wang L.F."/>
        </authorList>
    </citation>
    <scope>NUCLEOTIDE SEQUENCE [LARGE SCALE MRNA]</scope>
    <scope>VARIANT HIS-227</scope>
    <source>
        <tissue>Testis</tissue>
    </source>
</reference>
<reference key="2">
    <citation type="journal article" date="2004" name="Nat. Genet.">
        <title>Complete sequencing and characterization of 21,243 full-length human cDNAs.</title>
        <authorList>
            <person name="Ota T."/>
            <person name="Suzuki Y."/>
            <person name="Nishikawa T."/>
            <person name="Otsuki T."/>
            <person name="Sugiyama T."/>
            <person name="Irie R."/>
            <person name="Wakamatsu A."/>
            <person name="Hayashi K."/>
            <person name="Sato H."/>
            <person name="Nagai K."/>
            <person name="Kimura K."/>
            <person name="Makita H."/>
            <person name="Sekine M."/>
            <person name="Obayashi M."/>
            <person name="Nishi T."/>
            <person name="Shibahara T."/>
            <person name="Tanaka T."/>
            <person name="Ishii S."/>
            <person name="Yamamoto J."/>
            <person name="Saito K."/>
            <person name="Kawai Y."/>
            <person name="Isono Y."/>
            <person name="Nakamura Y."/>
            <person name="Nagahari K."/>
            <person name="Murakami K."/>
            <person name="Yasuda T."/>
            <person name="Iwayanagi T."/>
            <person name="Wagatsuma M."/>
            <person name="Shiratori A."/>
            <person name="Sudo H."/>
            <person name="Hosoiri T."/>
            <person name="Kaku Y."/>
            <person name="Kodaira H."/>
            <person name="Kondo H."/>
            <person name="Sugawara M."/>
            <person name="Takahashi M."/>
            <person name="Kanda K."/>
            <person name="Yokoi T."/>
            <person name="Furuya T."/>
            <person name="Kikkawa E."/>
            <person name="Omura Y."/>
            <person name="Abe K."/>
            <person name="Kamihara K."/>
            <person name="Katsuta N."/>
            <person name="Sato K."/>
            <person name="Tanikawa M."/>
            <person name="Yamazaki M."/>
            <person name="Ninomiya K."/>
            <person name="Ishibashi T."/>
            <person name="Yamashita H."/>
            <person name="Murakawa K."/>
            <person name="Fujimori K."/>
            <person name="Tanai H."/>
            <person name="Kimata M."/>
            <person name="Watanabe M."/>
            <person name="Hiraoka S."/>
            <person name="Chiba Y."/>
            <person name="Ishida S."/>
            <person name="Ono Y."/>
            <person name="Takiguchi S."/>
            <person name="Watanabe S."/>
            <person name="Yosida M."/>
            <person name="Hotuta T."/>
            <person name="Kusano J."/>
            <person name="Kanehori K."/>
            <person name="Takahashi-Fujii A."/>
            <person name="Hara H."/>
            <person name="Tanase T.-O."/>
            <person name="Nomura Y."/>
            <person name="Togiya S."/>
            <person name="Komai F."/>
            <person name="Hara R."/>
            <person name="Takeuchi K."/>
            <person name="Arita M."/>
            <person name="Imose N."/>
            <person name="Musashino K."/>
            <person name="Yuuki H."/>
            <person name="Oshima A."/>
            <person name="Sasaki N."/>
            <person name="Aotsuka S."/>
            <person name="Yoshikawa Y."/>
            <person name="Matsunawa H."/>
            <person name="Ichihara T."/>
            <person name="Shiohata N."/>
            <person name="Sano S."/>
            <person name="Moriya S."/>
            <person name="Momiyama H."/>
            <person name="Satoh N."/>
            <person name="Takami S."/>
            <person name="Terashima Y."/>
            <person name="Suzuki O."/>
            <person name="Nakagawa S."/>
            <person name="Senoh A."/>
            <person name="Mizoguchi H."/>
            <person name="Goto Y."/>
            <person name="Shimizu F."/>
            <person name="Wakebe H."/>
            <person name="Hishigaki H."/>
            <person name="Watanabe T."/>
            <person name="Sugiyama A."/>
            <person name="Takemoto M."/>
            <person name="Kawakami B."/>
            <person name="Yamazaki M."/>
            <person name="Watanabe K."/>
            <person name="Kumagai A."/>
            <person name="Itakura S."/>
            <person name="Fukuzumi Y."/>
            <person name="Fujimori Y."/>
            <person name="Komiyama M."/>
            <person name="Tashiro H."/>
            <person name="Tanigami A."/>
            <person name="Fujiwara T."/>
            <person name="Ono T."/>
            <person name="Yamada K."/>
            <person name="Fujii Y."/>
            <person name="Ozaki K."/>
            <person name="Hirao M."/>
            <person name="Ohmori Y."/>
            <person name="Kawabata A."/>
            <person name="Hikiji T."/>
            <person name="Kobatake N."/>
            <person name="Inagaki H."/>
            <person name="Ikema Y."/>
            <person name="Okamoto S."/>
            <person name="Okitani R."/>
            <person name="Kawakami T."/>
            <person name="Noguchi S."/>
            <person name="Itoh T."/>
            <person name="Shigeta K."/>
            <person name="Senba T."/>
            <person name="Matsumura K."/>
            <person name="Nakajima Y."/>
            <person name="Mizuno T."/>
            <person name="Morinaga M."/>
            <person name="Sasaki M."/>
            <person name="Togashi T."/>
            <person name="Oyama M."/>
            <person name="Hata H."/>
            <person name="Watanabe M."/>
            <person name="Komatsu T."/>
            <person name="Mizushima-Sugano J."/>
            <person name="Satoh T."/>
            <person name="Shirai Y."/>
            <person name="Takahashi Y."/>
            <person name="Nakagawa K."/>
            <person name="Okumura K."/>
            <person name="Nagase T."/>
            <person name="Nomura N."/>
            <person name="Kikuchi H."/>
            <person name="Masuho Y."/>
            <person name="Yamashita R."/>
            <person name="Nakai K."/>
            <person name="Yada T."/>
            <person name="Nakamura Y."/>
            <person name="Ohara O."/>
            <person name="Isogai T."/>
            <person name="Sugano S."/>
        </authorList>
    </citation>
    <scope>NUCLEOTIDE SEQUENCE [LARGE SCALE MRNA]</scope>
    <scope>VARIANTS PHE-37; VAL-51 AND HIS-227</scope>
    <source>
        <tissue>Testis</tissue>
    </source>
</reference>
<reference key="3">
    <citation type="journal article" date="2004" name="Nature">
        <title>The DNA sequence and biology of human chromosome 19.</title>
        <authorList>
            <person name="Grimwood J."/>
            <person name="Gordon L.A."/>
            <person name="Olsen A.S."/>
            <person name="Terry A."/>
            <person name="Schmutz J."/>
            <person name="Lamerdin J.E."/>
            <person name="Hellsten U."/>
            <person name="Goodstein D."/>
            <person name="Couronne O."/>
            <person name="Tran-Gyamfi M."/>
            <person name="Aerts A."/>
            <person name="Altherr M."/>
            <person name="Ashworth L."/>
            <person name="Bajorek E."/>
            <person name="Black S."/>
            <person name="Branscomb E."/>
            <person name="Caenepeel S."/>
            <person name="Carrano A.V."/>
            <person name="Caoile C."/>
            <person name="Chan Y.M."/>
            <person name="Christensen M."/>
            <person name="Cleland C.A."/>
            <person name="Copeland A."/>
            <person name="Dalin E."/>
            <person name="Dehal P."/>
            <person name="Denys M."/>
            <person name="Detter J.C."/>
            <person name="Escobar J."/>
            <person name="Flowers D."/>
            <person name="Fotopulos D."/>
            <person name="Garcia C."/>
            <person name="Georgescu A.M."/>
            <person name="Glavina T."/>
            <person name="Gomez M."/>
            <person name="Gonzales E."/>
            <person name="Groza M."/>
            <person name="Hammon N."/>
            <person name="Hawkins T."/>
            <person name="Haydu L."/>
            <person name="Ho I."/>
            <person name="Huang W."/>
            <person name="Israni S."/>
            <person name="Jett J."/>
            <person name="Kadner K."/>
            <person name="Kimball H."/>
            <person name="Kobayashi A."/>
            <person name="Larionov V."/>
            <person name="Leem S.-H."/>
            <person name="Lopez F."/>
            <person name="Lou Y."/>
            <person name="Lowry S."/>
            <person name="Malfatti S."/>
            <person name="Martinez D."/>
            <person name="McCready P.M."/>
            <person name="Medina C."/>
            <person name="Morgan J."/>
            <person name="Nelson K."/>
            <person name="Nolan M."/>
            <person name="Ovcharenko I."/>
            <person name="Pitluck S."/>
            <person name="Pollard M."/>
            <person name="Popkie A.P."/>
            <person name="Predki P."/>
            <person name="Quan G."/>
            <person name="Ramirez L."/>
            <person name="Rash S."/>
            <person name="Retterer J."/>
            <person name="Rodriguez A."/>
            <person name="Rogers S."/>
            <person name="Salamov A."/>
            <person name="Salazar A."/>
            <person name="She X."/>
            <person name="Smith D."/>
            <person name="Slezak T."/>
            <person name="Solovyev V."/>
            <person name="Thayer N."/>
            <person name="Tice H."/>
            <person name="Tsai M."/>
            <person name="Ustaszewska A."/>
            <person name="Vo N."/>
            <person name="Wagner M."/>
            <person name="Wheeler J."/>
            <person name="Wu K."/>
            <person name="Xie G."/>
            <person name="Yang J."/>
            <person name="Dubchak I."/>
            <person name="Furey T.S."/>
            <person name="DeJong P."/>
            <person name="Dickson M."/>
            <person name="Gordon D."/>
            <person name="Eichler E.E."/>
            <person name="Pennacchio L.A."/>
            <person name="Richardson P."/>
            <person name="Stubbs L."/>
            <person name="Rokhsar D.S."/>
            <person name="Myers R.M."/>
            <person name="Rubin E.M."/>
            <person name="Lucas S.M."/>
        </authorList>
    </citation>
    <scope>NUCLEOTIDE SEQUENCE [LARGE SCALE GENOMIC DNA]</scope>
</reference>
<reference key="4">
    <citation type="journal article" date="2004" name="Genome Res.">
        <title>The status, quality, and expansion of the NIH full-length cDNA project: the Mammalian Gene Collection (MGC).</title>
        <authorList>
            <consortium name="The MGC Project Team"/>
        </authorList>
    </citation>
    <scope>NUCLEOTIDE SEQUENCE [LARGE SCALE MRNA]</scope>
    <source>
        <tissue>Testis</tissue>
    </source>
</reference>
<reference key="5">
    <citation type="journal article" date="2012" name="Proc. Natl. Acad. Sci. U.S.A.">
        <title>N-terminal acetylome analyses and functional insights of the N-terminal acetyltransferase NatB.</title>
        <authorList>
            <person name="Van Damme P."/>
            <person name="Lasa M."/>
            <person name="Polevoda B."/>
            <person name="Gazquez C."/>
            <person name="Elosegui-Artola A."/>
            <person name="Kim D.S."/>
            <person name="De Juan-Pardo E."/>
            <person name="Demeyer K."/>
            <person name="Hole K."/>
            <person name="Larrea E."/>
            <person name="Timmerman E."/>
            <person name="Prieto J."/>
            <person name="Arnesen T."/>
            <person name="Sherman F."/>
            <person name="Gevaert K."/>
            <person name="Aldabe R."/>
        </authorList>
    </citation>
    <scope>IDENTIFICATION BY MASS SPECTROMETRY [LARGE SCALE ANALYSIS]</scope>
</reference>
<reference key="6">
    <citation type="journal article" date="2006" name="Science">
        <title>The consensus coding sequences of human breast and colorectal cancers.</title>
        <authorList>
            <person name="Sjoeblom T."/>
            <person name="Jones S."/>
            <person name="Wood L.D."/>
            <person name="Parsons D.W."/>
            <person name="Lin J."/>
            <person name="Barber T.D."/>
            <person name="Mandelker D."/>
            <person name="Leary R.J."/>
            <person name="Ptak J."/>
            <person name="Silliman N."/>
            <person name="Szabo S."/>
            <person name="Buckhaults P."/>
            <person name="Farrell C."/>
            <person name="Meeh P."/>
            <person name="Markowitz S.D."/>
            <person name="Willis J."/>
            <person name="Dawson D."/>
            <person name="Willson J.K.V."/>
            <person name="Gazdar A.F."/>
            <person name="Hartigan J."/>
            <person name="Wu L."/>
            <person name="Liu C."/>
            <person name="Parmigiani G."/>
            <person name="Park B.H."/>
            <person name="Bachman K.E."/>
            <person name="Papadopoulos N."/>
            <person name="Vogelstein B."/>
            <person name="Kinzler K.W."/>
            <person name="Velculescu V.E."/>
        </authorList>
    </citation>
    <scope>VARIANTS [LARGE SCALE ANALYSIS] ASP-42 AND THR-332</scope>
</reference>
<reference key="7">
    <citation type="journal article" date="2021" name="Am. J. Hum. Genet.">
        <title>Homozygous pathogenic variants in ACTL9 cause fertilization failure and male infertility in humans and mice.</title>
        <authorList>
            <person name="Dai J."/>
            <person name="Zhang T."/>
            <person name="Guo J."/>
            <person name="Zhou Q."/>
            <person name="Gu Y."/>
            <person name="Zhang J."/>
            <person name="Hu L."/>
            <person name="Zong Y."/>
            <person name="Song J."/>
            <person name="Zhang S."/>
            <person name="Dai C."/>
            <person name="Gong F."/>
            <person name="Lu G."/>
            <person name="Zheng W."/>
            <person name="Lin G."/>
        </authorList>
    </citation>
    <scope>INVOLVEMENT IN SPGF53</scope>
    <scope>VARIANTS SPGF53 LEU-345; LEU-380 AND 403-TYR--TYR-416 DEL</scope>
    <scope>CHARACTERIZATION OF VARIANTS SPGF53 LEU-345; LEU-380 AND 403-TYR--TYR-416 DEL</scope>
    <scope>TISSUE SPECIFICITY</scope>
    <scope>SUBCELLULAR LOCATION</scope>
    <scope>INTERACTION WITH ACTL7A</scope>
    <scope>FUNCTION</scope>
</reference>